<evidence type="ECO:0000250" key="1">
    <source>
        <dbReference type="UniProtKB" id="P33946"/>
    </source>
</evidence>
<evidence type="ECO:0000250" key="2">
    <source>
        <dbReference type="UniProtKB" id="Q5ZKX9"/>
    </source>
</evidence>
<evidence type="ECO:0000269" key="3">
    <source>
    </source>
</evidence>
<evidence type="ECO:0000269" key="4">
    <source>
    </source>
</evidence>
<evidence type="ECO:0000269" key="5">
    <source>
    </source>
</evidence>
<evidence type="ECO:0000269" key="6">
    <source>
    </source>
</evidence>
<evidence type="ECO:0000269" key="7">
    <source>
    </source>
</evidence>
<evidence type="ECO:0000269" key="8">
    <source>
    </source>
</evidence>
<evidence type="ECO:0000303" key="9">
    <source>
    </source>
</evidence>
<evidence type="ECO:0000305" key="10"/>
<accession>P24390</accession>
<accession>B2R6N4</accession>
<accession>Q54A39</accession>
<accession>Q8NBW7</accession>
<comment type="function">
    <text evidence="3 4 5 7 8">Receptor for the C-terminal sequence motif K-D-E-L that is present on endoplasmic reticulum resident proteins and that mediates their recycling from the Golgi back to the endoplasmic reticulum.</text>
</comment>
<comment type="subunit">
    <text evidence="3">Upon ligand binding the receptor oligomerizes and interacts with components of the transport machinery such as ARFGAP1 and ARF1.</text>
</comment>
<comment type="interaction">
    <interactant intactId="EBI-1043076">
        <id>P24390</id>
    </interactant>
    <interactant intactId="EBI-80426">
        <id>Q15700</id>
        <label>DLG2</label>
    </interactant>
    <organismsDiffer>false</organismsDiffer>
    <experiments>3</experiments>
</comment>
<comment type="interaction">
    <interactant intactId="EBI-1043076">
        <id>P24390</id>
    </interactant>
    <interactant intactId="EBI-80440">
        <id>Q92796</id>
        <label>DLG3</label>
    </interactant>
    <organismsDiffer>false</organismsDiffer>
    <experiments>3</experiments>
</comment>
<comment type="interaction">
    <interactant intactId="EBI-1043076">
        <id>P24390</id>
    </interactant>
    <interactant intactId="EBI-1047093">
        <id>O76011</id>
        <label>KRT34</label>
    </interactant>
    <organismsDiffer>false</organismsDiffer>
    <experiments>3</experiments>
</comment>
<comment type="subcellular location">
    <subcellularLocation>
        <location evidence="5 6 7 8">Golgi apparatus membrane</location>
        <topology evidence="1">Multi-pass membrane protein</topology>
    </subcellularLocation>
    <subcellularLocation>
        <location evidence="5">Cytoplasmic vesicle</location>
        <location evidence="5">COPI-coated vesicle membrane</location>
        <topology evidence="1">Multi-pass membrane protein</topology>
    </subcellularLocation>
    <subcellularLocation>
        <location evidence="5 7 8">Endoplasmic reticulum membrane</location>
        <topology evidence="1">Multi-pass membrane protein</topology>
    </subcellularLocation>
    <subcellularLocation>
        <location evidence="1">Endoplasmic reticulum-Golgi intermediate compartment membrane</location>
        <topology evidence="1">Multi-pass membrane protein</topology>
    </subcellularLocation>
    <text evidence="5 7 8">Localized in the Golgi in the absence of bound proteins with the sequence motif K-D-E-L. Trafficks back to the endoplasmic reticulum together with cargo proteins containing the sequence motif K-D-E-L.</text>
</comment>
<comment type="alternative products">
    <event type="alternative splicing"/>
    <isoform>
        <id>P24390-1</id>
        <name>1</name>
        <sequence type="displayed"/>
    </isoform>
    <isoform>
        <id>P24390-2</id>
        <name>2</name>
        <sequence type="described" ref="VSP_055484"/>
    </isoform>
</comment>
<comment type="domain">
    <text evidence="2 7">Binds the C-terminal sequence motif K-D-E-L in a hydrophilic cavity between the transmembrane domains. This triggers a conformation change that exposes a Lys-rich patch on the cytosolic surface of the protein (By similarity). This patch mediates recycling from the Golgi to the endoplasmic reticulum, probably via COPI vesicles (PubMed:30846601).</text>
</comment>
<comment type="PTM">
    <text evidence="4">Phosphorylation by PKA at Ser-209 is required for endoplasmic reticulum retention function.</text>
</comment>
<comment type="similarity">
    <text evidence="10">Belongs to the ERD2 family.</text>
</comment>
<keyword id="KW-0025">Alternative splicing</keyword>
<keyword id="KW-0968">Cytoplasmic vesicle</keyword>
<keyword id="KW-0256">Endoplasmic reticulum</keyword>
<keyword id="KW-0931">ER-Golgi transport</keyword>
<keyword id="KW-0333">Golgi apparatus</keyword>
<keyword id="KW-0472">Membrane</keyword>
<keyword id="KW-0597">Phosphoprotein</keyword>
<keyword id="KW-0653">Protein transport</keyword>
<keyword id="KW-1267">Proteomics identification</keyword>
<keyword id="KW-0675">Receptor</keyword>
<keyword id="KW-1185">Reference proteome</keyword>
<keyword id="KW-0812">Transmembrane</keyword>
<keyword id="KW-1133">Transmembrane helix</keyword>
<keyword id="KW-0813">Transport</keyword>
<dbReference type="EMBL" id="X55885">
    <property type="protein sequence ID" value="CAA39371.1"/>
    <property type="molecule type" value="mRNA"/>
</dbReference>
<dbReference type="EMBL" id="AB097047">
    <property type="protein sequence ID" value="BAC77400.1"/>
    <property type="molecule type" value="mRNA"/>
</dbReference>
<dbReference type="EMBL" id="AK075185">
    <property type="protein sequence ID" value="BAC11457.1"/>
    <property type="molecule type" value="mRNA"/>
</dbReference>
<dbReference type="EMBL" id="AK312647">
    <property type="protein sequence ID" value="BAG35531.1"/>
    <property type="molecule type" value="mRNA"/>
</dbReference>
<dbReference type="EMBL" id="AC011514">
    <property type="status" value="NOT_ANNOTATED_CDS"/>
    <property type="molecule type" value="Genomic_DNA"/>
</dbReference>
<dbReference type="EMBL" id="CH471177">
    <property type="protein sequence ID" value="EAW52340.1"/>
    <property type="molecule type" value="Genomic_DNA"/>
</dbReference>
<dbReference type="EMBL" id="CH471177">
    <property type="protein sequence ID" value="EAW52343.1"/>
    <property type="molecule type" value="Genomic_DNA"/>
</dbReference>
<dbReference type="EMBL" id="CH471177">
    <property type="protein sequence ID" value="EAW52345.1"/>
    <property type="molecule type" value="Genomic_DNA"/>
</dbReference>
<dbReference type="EMBL" id="BC018778">
    <property type="protein sequence ID" value="AAH18778.1"/>
    <property type="molecule type" value="mRNA"/>
</dbReference>
<dbReference type="CCDS" id="CCDS12718.1">
    <molecule id="P24390-1"/>
</dbReference>
<dbReference type="PIR" id="S13293">
    <property type="entry name" value="S13293"/>
</dbReference>
<dbReference type="RefSeq" id="NP_006792.1">
    <molecule id="P24390-1"/>
    <property type="nucleotide sequence ID" value="NM_006801.3"/>
</dbReference>
<dbReference type="SMR" id="P24390"/>
<dbReference type="BioGRID" id="116145">
    <property type="interactions" value="121"/>
</dbReference>
<dbReference type="DIP" id="DIP-48668N"/>
<dbReference type="FunCoup" id="P24390">
    <property type="interactions" value="1693"/>
</dbReference>
<dbReference type="IntAct" id="P24390">
    <property type="interactions" value="83"/>
</dbReference>
<dbReference type="MINT" id="P24390"/>
<dbReference type="STRING" id="9606.ENSP00000329471"/>
<dbReference type="TCDB" id="9.B.191.1.5">
    <property type="family name" value="the endoplasmic reticulum retention receptor (kdelr) family"/>
</dbReference>
<dbReference type="iPTMnet" id="P24390"/>
<dbReference type="PhosphoSitePlus" id="P24390"/>
<dbReference type="SwissPalm" id="P24390"/>
<dbReference type="BioMuta" id="KDELR1"/>
<dbReference type="DMDM" id="119543"/>
<dbReference type="jPOST" id="P24390"/>
<dbReference type="MassIVE" id="P24390"/>
<dbReference type="PaxDb" id="9606-ENSP00000329471"/>
<dbReference type="PeptideAtlas" id="P24390"/>
<dbReference type="PRIDE" id="P24390"/>
<dbReference type="ProteomicsDB" id="54202">
    <molecule id="P24390-1"/>
</dbReference>
<dbReference type="Pumba" id="P24390"/>
<dbReference type="TopDownProteomics" id="P24390-1">
    <molecule id="P24390-1"/>
</dbReference>
<dbReference type="ABCD" id="P24390">
    <property type="antibodies" value="1 sequenced antibody"/>
</dbReference>
<dbReference type="Antibodypedia" id="3381">
    <property type="antibodies" value="168 antibodies from 27 providers"/>
</dbReference>
<dbReference type="DNASU" id="10945"/>
<dbReference type="Ensembl" id="ENST00000330720.7">
    <molecule id="P24390-1"/>
    <property type="protein sequence ID" value="ENSP00000329471.2"/>
    <property type="gene ID" value="ENSG00000105438.9"/>
</dbReference>
<dbReference type="Ensembl" id="ENST00000597017.5">
    <molecule id="P24390-2"/>
    <property type="protein sequence ID" value="ENSP00000470841.1"/>
    <property type="gene ID" value="ENSG00000105438.9"/>
</dbReference>
<dbReference type="GeneID" id="10945"/>
<dbReference type="KEGG" id="hsa:10945"/>
<dbReference type="MANE-Select" id="ENST00000330720.7">
    <property type="protein sequence ID" value="ENSP00000329471.2"/>
    <property type="RefSeq nucleotide sequence ID" value="NM_006801.3"/>
    <property type="RefSeq protein sequence ID" value="NP_006792.1"/>
</dbReference>
<dbReference type="UCSC" id="uc002pja.2">
    <molecule id="P24390-1"/>
    <property type="organism name" value="human"/>
</dbReference>
<dbReference type="AGR" id="HGNC:6304"/>
<dbReference type="CTD" id="10945"/>
<dbReference type="DisGeNET" id="10945"/>
<dbReference type="GeneCards" id="KDELR1"/>
<dbReference type="HGNC" id="HGNC:6304">
    <property type="gene designation" value="KDELR1"/>
</dbReference>
<dbReference type="HPA" id="ENSG00000105438">
    <property type="expression patterns" value="Low tissue specificity"/>
</dbReference>
<dbReference type="MIM" id="131235">
    <property type="type" value="gene"/>
</dbReference>
<dbReference type="neXtProt" id="NX_P24390"/>
<dbReference type="OpenTargets" id="ENSG00000105438"/>
<dbReference type="PharmGKB" id="PA30083"/>
<dbReference type="VEuPathDB" id="HostDB:ENSG00000105438"/>
<dbReference type="eggNOG" id="KOG3106">
    <property type="taxonomic scope" value="Eukaryota"/>
</dbReference>
<dbReference type="GeneTree" id="ENSGT00390000004010"/>
<dbReference type="HOGENOM" id="CLU_057784_0_0_1"/>
<dbReference type="InParanoid" id="P24390"/>
<dbReference type="OMA" id="YAEDHYD"/>
<dbReference type="OrthoDB" id="7694678at2759"/>
<dbReference type="PAN-GO" id="P24390">
    <property type="GO annotations" value="5 GO annotations based on evolutionary models"/>
</dbReference>
<dbReference type="PhylomeDB" id="P24390"/>
<dbReference type="TreeFam" id="TF314792"/>
<dbReference type="PathwayCommons" id="P24390"/>
<dbReference type="Reactome" id="R-HSA-6807878">
    <property type="pathway name" value="COPI-mediated anterograde transport"/>
</dbReference>
<dbReference type="Reactome" id="R-HSA-6811434">
    <property type="pathway name" value="COPI-dependent Golgi-to-ER retrograde traffic"/>
</dbReference>
<dbReference type="SignaLink" id="P24390"/>
<dbReference type="SIGNOR" id="P24390"/>
<dbReference type="BioGRID-ORCS" id="10945">
    <property type="hits" value="31 hits in 1152 CRISPR screens"/>
</dbReference>
<dbReference type="ChiTaRS" id="KDELR1">
    <property type="organism name" value="human"/>
</dbReference>
<dbReference type="GeneWiki" id="KDELR1"/>
<dbReference type="GenomeRNAi" id="10945"/>
<dbReference type="Pharos" id="P24390">
    <property type="development level" value="Tbio"/>
</dbReference>
<dbReference type="PRO" id="PR:P24390"/>
<dbReference type="Proteomes" id="UP000005640">
    <property type="component" value="Chromosome 19"/>
</dbReference>
<dbReference type="RNAct" id="P24390">
    <property type="molecule type" value="protein"/>
</dbReference>
<dbReference type="Bgee" id="ENSG00000105438">
    <property type="expression patterns" value="Expressed in parotid gland and 184 other cell types or tissues"/>
</dbReference>
<dbReference type="ExpressionAtlas" id="P24390">
    <property type="expression patterns" value="baseline and differential"/>
</dbReference>
<dbReference type="GO" id="GO:0005801">
    <property type="term" value="C:cis-Golgi network"/>
    <property type="evidence" value="ECO:0000318"/>
    <property type="project" value="GO_Central"/>
</dbReference>
<dbReference type="GO" id="GO:0030663">
    <property type="term" value="C:COPI-coated vesicle membrane"/>
    <property type="evidence" value="ECO:0007669"/>
    <property type="project" value="UniProtKB-SubCell"/>
</dbReference>
<dbReference type="GO" id="GO:0005783">
    <property type="term" value="C:endoplasmic reticulum"/>
    <property type="evidence" value="ECO:0000318"/>
    <property type="project" value="GO_Central"/>
</dbReference>
<dbReference type="GO" id="GO:0005789">
    <property type="term" value="C:endoplasmic reticulum membrane"/>
    <property type="evidence" value="ECO:0000314"/>
    <property type="project" value="UniProtKB"/>
</dbReference>
<dbReference type="GO" id="GO:0005793">
    <property type="term" value="C:endoplasmic reticulum-Golgi intermediate compartment"/>
    <property type="evidence" value="ECO:0000314"/>
    <property type="project" value="UniProtKB"/>
</dbReference>
<dbReference type="GO" id="GO:0033116">
    <property type="term" value="C:endoplasmic reticulum-Golgi intermediate compartment membrane"/>
    <property type="evidence" value="ECO:0000304"/>
    <property type="project" value="Reactome"/>
</dbReference>
<dbReference type="GO" id="GO:0000139">
    <property type="term" value="C:Golgi membrane"/>
    <property type="evidence" value="ECO:0000314"/>
    <property type="project" value="UniProtKB"/>
</dbReference>
<dbReference type="GO" id="GO:0030133">
    <property type="term" value="C:transport vesicle"/>
    <property type="evidence" value="ECO:0000304"/>
    <property type="project" value="Reactome"/>
</dbReference>
<dbReference type="GO" id="GO:0046923">
    <property type="term" value="F:ER retention sequence binding"/>
    <property type="evidence" value="ECO:0000318"/>
    <property type="project" value="GO_Central"/>
</dbReference>
<dbReference type="GO" id="GO:0005046">
    <property type="term" value="F:KDEL sequence binding"/>
    <property type="evidence" value="ECO:0000314"/>
    <property type="project" value="UniProtKB"/>
</dbReference>
<dbReference type="GO" id="GO:0006621">
    <property type="term" value="P:protein retention in ER lumen"/>
    <property type="evidence" value="ECO:0000318"/>
    <property type="project" value="GO_Central"/>
</dbReference>
<dbReference type="GO" id="GO:0015031">
    <property type="term" value="P:protein transport"/>
    <property type="evidence" value="ECO:0007669"/>
    <property type="project" value="UniProtKB-KW"/>
</dbReference>
<dbReference type="GO" id="GO:0006890">
    <property type="term" value="P:retrograde vesicle-mediated transport, Golgi to endoplasmic reticulum"/>
    <property type="evidence" value="ECO:0000314"/>
    <property type="project" value="UniProtKB"/>
</dbReference>
<dbReference type="GO" id="GO:0070231">
    <property type="term" value="P:T cell apoptotic process"/>
    <property type="evidence" value="ECO:0007669"/>
    <property type="project" value="Ensembl"/>
</dbReference>
<dbReference type="GO" id="GO:0030217">
    <property type="term" value="P:T cell differentiation"/>
    <property type="evidence" value="ECO:0007669"/>
    <property type="project" value="Ensembl"/>
</dbReference>
<dbReference type="InterPro" id="IPR000133">
    <property type="entry name" value="ER_ret_rcpt"/>
</dbReference>
<dbReference type="PANTHER" id="PTHR10585">
    <property type="entry name" value="ER LUMEN PROTEIN RETAINING RECEPTOR"/>
    <property type="match status" value="1"/>
</dbReference>
<dbReference type="Pfam" id="PF00810">
    <property type="entry name" value="ER_lumen_recept"/>
    <property type="match status" value="1"/>
</dbReference>
<dbReference type="PRINTS" id="PR00660">
    <property type="entry name" value="ERLUMENR"/>
</dbReference>
<dbReference type="PROSITE" id="PS00951">
    <property type="entry name" value="ER_LUMEN_RECEPTOR_1"/>
    <property type="match status" value="1"/>
</dbReference>
<dbReference type="PROSITE" id="PS00952">
    <property type="entry name" value="ER_LUMEN_RECEPTOR_2"/>
    <property type="match status" value="1"/>
</dbReference>
<protein>
    <recommendedName>
        <fullName>ER lumen protein-retaining receptor 1</fullName>
    </recommendedName>
    <alternativeName>
        <fullName>KDEL endoplasmic reticulum protein retention receptor 1</fullName>
        <shortName>KDEL receptor 1</shortName>
    </alternativeName>
    <alternativeName>
        <fullName>Putative MAPK-activating protein PM23</fullName>
    </alternativeName>
</protein>
<sequence>MNLFRFLGDLSHLLAIILLLLKIWKSRSCAGISGKSQVLFAVVFTARYLDLFTNYISLYNTCMKVVYIACSFTTVWLIYSKFKATYDGNHDTFRVEFLVVPTAILAFLVNHDFTPLEILWTFSIYLESVAILPQLFMVSKTGEAETITSHYLFALGVYRTLYLFNWIWRYHFEGFFDLIAIVAGLVQTVLYCDFFYLYITKVLKGKKLSLPA</sequence>
<reference key="1">
    <citation type="journal article" date="1990" name="Nature">
        <title>A human homologue of the yeast HDEL receptor.</title>
        <authorList>
            <person name="Lewis M.J."/>
            <person name="Pelham H.R.B."/>
        </authorList>
    </citation>
    <scope>NUCLEOTIDE SEQUENCE [MRNA] (ISOFORM 1)</scope>
    <scope>SUBCELLULAR LOCATION</scope>
    <source>
        <tissue>Placenta</tissue>
    </source>
</reference>
<reference key="2">
    <citation type="journal article" date="2003" name="Oncogene">
        <title>Large-scale identification and characterization of human genes that activate NF-kappaB and MAPK signaling pathways.</title>
        <authorList>
            <person name="Matsuda A."/>
            <person name="Suzuki Y."/>
            <person name="Honda G."/>
            <person name="Muramatsu S."/>
            <person name="Matsuzaki O."/>
            <person name="Nagano Y."/>
            <person name="Doi T."/>
            <person name="Shimotohno K."/>
            <person name="Harada T."/>
            <person name="Nishida E."/>
            <person name="Hayashi H."/>
            <person name="Sugano S."/>
        </authorList>
    </citation>
    <scope>NUCLEOTIDE SEQUENCE [LARGE SCALE MRNA] (ISOFORM 1)</scope>
    <source>
        <tissue>Lung fibroblast</tissue>
    </source>
</reference>
<reference key="3">
    <citation type="journal article" date="2004" name="Nat. Genet.">
        <title>Complete sequencing and characterization of 21,243 full-length human cDNAs.</title>
        <authorList>
            <person name="Ota T."/>
            <person name="Suzuki Y."/>
            <person name="Nishikawa T."/>
            <person name="Otsuki T."/>
            <person name="Sugiyama T."/>
            <person name="Irie R."/>
            <person name="Wakamatsu A."/>
            <person name="Hayashi K."/>
            <person name="Sato H."/>
            <person name="Nagai K."/>
            <person name="Kimura K."/>
            <person name="Makita H."/>
            <person name="Sekine M."/>
            <person name="Obayashi M."/>
            <person name="Nishi T."/>
            <person name="Shibahara T."/>
            <person name="Tanaka T."/>
            <person name="Ishii S."/>
            <person name="Yamamoto J."/>
            <person name="Saito K."/>
            <person name="Kawai Y."/>
            <person name="Isono Y."/>
            <person name="Nakamura Y."/>
            <person name="Nagahari K."/>
            <person name="Murakami K."/>
            <person name="Yasuda T."/>
            <person name="Iwayanagi T."/>
            <person name="Wagatsuma M."/>
            <person name="Shiratori A."/>
            <person name="Sudo H."/>
            <person name="Hosoiri T."/>
            <person name="Kaku Y."/>
            <person name="Kodaira H."/>
            <person name="Kondo H."/>
            <person name="Sugawara M."/>
            <person name="Takahashi M."/>
            <person name="Kanda K."/>
            <person name="Yokoi T."/>
            <person name="Furuya T."/>
            <person name="Kikkawa E."/>
            <person name="Omura Y."/>
            <person name="Abe K."/>
            <person name="Kamihara K."/>
            <person name="Katsuta N."/>
            <person name="Sato K."/>
            <person name="Tanikawa M."/>
            <person name="Yamazaki M."/>
            <person name="Ninomiya K."/>
            <person name="Ishibashi T."/>
            <person name="Yamashita H."/>
            <person name="Murakawa K."/>
            <person name="Fujimori K."/>
            <person name="Tanai H."/>
            <person name="Kimata M."/>
            <person name="Watanabe M."/>
            <person name="Hiraoka S."/>
            <person name="Chiba Y."/>
            <person name="Ishida S."/>
            <person name="Ono Y."/>
            <person name="Takiguchi S."/>
            <person name="Watanabe S."/>
            <person name="Yosida M."/>
            <person name="Hotuta T."/>
            <person name="Kusano J."/>
            <person name="Kanehori K."/>
            <person name="Takahashi-Fujii A."/>
            <person name="Hara H."/>
            <person name="Tanase T.-O."/>
            <person name="Nomura Y."/>
            <person name="Togiya S."/>
            <person name="Komai F."/>
            <person name="Hara R."/>
            <person name="Takeuchi K."/>
            <person name="Arita M."/>
            <person name="Imose N."/>
            <person name="Musashino K."/>
            <person name="Yuuki H."/>
            <person name="Oshima A."/>
            <person name="Sasaki N."/>
            <person name="Aotsuka S."/>
            <person name="Yoshikawa Y."/>
            <person name="Matsunawa H."/>
            <person name="Ichihara T."/>
            <person name="Shiohata N."/>
            <person name="Sano S."/>
            <person name="Moriya S."/>
            <person name="Momiyama H."/>
            <person name="Satoh N."/>
            <person name="Takami S."/>
            <person name="Terashima Y."/>
            <person name="Suzuki O."/>
            <person name="Nakagawa S."/>
            <person name="Senoh A."/>
            <person name="Mizoguchi H."/>
            <person name="Goto Y."/>
            <person name="Shimizu F."/>
            <person name="Wakebe H."/>
            <person name="Hishigaki H."/>
            <person name="Watanabe T."/>
            <person name="Sugiyama A."/>
            <person name="Takemoto M."/>
            <person name="Kawakami B."/>
            <person name="Yamazaki M."/>
            <person name="Watanabe K."/>
            <person name="Kumagai A."/>
            <person name="Itakura S."/>
            <person name="Fukuzumi Y."/>
            <person name="Fujimori Y."/>
            <person name="Komiyama M."/>
            <person name="Tashiro H."/>
            <person name="Tanigami A."/>
            <person name="Fujiwara T."/>
            <person name="Ono T."/>
            <person name="Yamada K."/>
            <person name="Fujii Y."/>
            <person name="Ozaki K."/>
            <person name="Hirao M."/>
            <person name="Ohmori Y."/>
            <person name="Kawabata A."/>
            <person name="Hikiji T."/>
            <person name="Kobatake N."/>
            <person name="Inagaki H."/>
            <person name="Ikema Y."/>
            <person name="Okamoto S."/>
            <person name="Okitani R."/>
            <person name="Kawakami T."/>
            <person name="Noguchi S."/>
            <person name="Itoh T."/>
            <person name="Shigeta K."/>
            <person name="Senba T."/>
            <person name="Matsumura K."/>
            <person name="Nakajima Y."/>
            <person name="Mizuno T."/>
            <person name="Morinaga M."/>
            <person name="Sasaki M."/>
            <person name="Togashi T."/>
            <person name="Oyama M."/>
            <person name="Hata H."/>
            <person name="Watanabe M."/>
            <person name="Komatsu T."/>
            <person name="Mizushima-Sugano J."/>
            <person name="Satoh T."/>
            <person name="Shirai Y."/>
            <person name="Takahashi Y."/>
            <person name="Nakagawa K."/>
            <person name="Okumura K."/>
            <person name="Nagase T."/>
            <person name="Nomura N."/>
            <person name="Kikuchi H."/>
            <person name="Masuho Y."/>
            <person name="Yamashita R."/>
            <person name="Nakai K."/>
            <person name="Yada T."/>
            <person name="Nakamura Y."/>
            <person name="Ohara O."/>
            <person name="Isogai T."/>
            <person name="Sugano S."/>
        </authorList>
    </citation>
    <scope>NUCLEOTIDE SEQUENCE [LARGE SCALE MRNA] (ISOFORMS 1 AND 2)</scope>
    <source>
        <tissue>Placenta</tissue>
    </source>
</reference>
<reference key="4">
    <citation type="journal article" date="2004" name="Nature">
        <title>The DNA sequence and biology of human chromosome 19.</title>
        <authorList>
            <person name="Grimwood J."/>
            <person name="Gordon L.A."/>
            <person name="Olsen A.S."/>
            <person name="Terry A."/>
            <person name="Schmutz J."/>
            <person name="Lamerdin J.E."/>
            <person name="Hellsten U."/>
            <person name="Goodstein D."/>
            <person name="Couronne O."/>
            <person name="Tran-Gyamfi M."/>
            <person name="Aerts A."/>
            <person name="Altherr M."/>
            <person name="Ashworth L."/>
            <person name="Bajorek E."/>
            <person name="Black S."/>
            <person name="Branscomb E."/>
            <person name="Caenepeel S."/>
            <person name="Carrano A.V."/>
            <person name="Caoile C."/>
            <person name="Chan Y.M."/>
            <person name="Christensen M."/>
            <person name="Cleland C.A."/>
            <person name="Copeland A."/>
            <person name="Dalin E."/>
            <person name="Dehal P."/>
            <person name="Denys M."/>
            <person name="Detter J.C."/>
            <person name="Escobar J."/>
            <person name="Flowers D."/>
            <person name="Fotopulos D."/>
            <person name="Garcia C."/>
            <person name="Georgescu A.M."/>
            <person name="Glavina T."/>
            <person name="Gomez M."/>
            <person name="Gonzales E."/>
            <person name="Groza M."/>
            <person name="Hammon N."/>
            <person name="Hawkins T."/>
            <person name="Haydu L."/>
            <person name="Ho I."/>
            <person name="Huang W."/>
            <person name="Israni S."/>
            <person name="Jett J."/>
            <person name="Kadner K."/>
            <person name="Kimball H."/>
            <person name="Kobayashi A."/>
            <person name="Larionov V."/>
            <person name="Leem S.-H."/>
            <person name="Lopez F."/>
            <person name="Lou Y."/>
            <person name="Lowry S."/>
            <person name="Malfatti S."/>
            <person name="Martinez D."/>
            <person name="McCready P.M."/>
            <person name="Medina C."/>
            <person name="Morgan J."/>
            <person name="Nelson K."/>
            <person name="Nolan M."/>
            <person name="Ovcharenko I."/>
            <person name="Pitluck S."/>
            <person name="Pollard M."/>
            <person name="Popkie A.P."/>
            <person name="Predki P."/>
            <person name="Quan G."/>
            <person name="Ramirez L."/>
            <person name="Rash S."/>
            <person name="Retterer J."/>
            <person name="Rodriguez A."/>
            <person name="Rogers S."/>
            <person name="Salamov A."/>
            <person name="Salazar A."/>
            <person name="She X."/>
            <person name="Smith D."/>
            <person name="Slezak T."/>
            <person name="Solovyev V."/>
            <person name="Thayer N."/>
            <person name="Tice H."/>
            <person name="Tsai M."/>
            <person name="Ustaszewska A."/>
            <person name="Vo N."/>
            <person name="Wagner M."/>
            <person name="Wheeler J."/>
            <person name="Wu K."/>
            <person name="Xie G."/>
            <person name="Yang J."/>
            <person name="Dubchak I."/>
            <person name="Furey T.S."/>
            <person name="DeJong P."/>
            <person name="Dickson M."/>
            <person name="Gordon D."/>
            <person name="Eichler E.E."/>
            <person name="Pennacchio L.A."/>
            <person name="Richardson P."/>
            <person name="Stubbs L."/>
            <person name="Rokhsar D.S."/>
            <person name="Myers R.M."/>
            <person name="Rubin E.M."/>
            <person name="Lucas S.M."/>
        </authorList>
    </citation>
    <scope>NUCLEOTIDE SEQUENCE [LARGE SCALE GENOMIC DNA]</scope>
</reference>
<reference key="5">
    <citation type="submission" date="2005-07" db="EMBL/GenBank/DDBJ databases">
        <authorList>
            <person name="Mural R.J."/>
            <person name="Istrail S."/>
            <person name="Sutton G.G."/>
            <person name="Florea L."/>
            <person name="Halpern A.L."/>
            <person name="Mobarry C.M."/>
            <person name="Lippert R."/>
            <person name="Walenz B."/>
            <person name="Shatkay H."/>
            <person name="Dew I."/>
            <person name="Miller J.R."/>
            <person name="Flanigan M.J."/>
            <person name="Edwards N.J."/>
            <person name="Bolanos R."/>
            <person name="Fasulo D."/>
            <person name="Halldorsson B.V."/>
            <person name="Hannenhalli S."/>
            <person name="Turner R."/>
            <person name="Yooseph S."/>
            <person name="Lu F."/>
            <person name="Nusskern D.R."/>
            <person name="Shue B.C."/>
            <person name="Zheng X.H."/>
            <person name="Zhong F."/>
            <person name="Delcher A.L."/>
            <person name="Huson D.H."/>
            <person name="Kravitz S.A."/>
            <person name="Mouchard L."/>
            <person name="Reinert K."/>
            <person name="Remington K.A."/>
            <person name="Clark A.G."/>
            <person name="Waterman M.S."/>
            <person name="Eichler E.E."/>
            <person name="Adams M.D."/>
            <person name="Hunkapiller M.W."/>
            <person name="Myers E.W."/>
            <person name="Venter J.C."/>
        </authorList>
    </citation>
    <scope>NUCLEOTIDE SEQUENCE [LARGE SCALE GENOMIC DNA]</scope>
</reference>
<reference key="6">
    <citation type="journal article" date="2004" name="Genome Res.">
        <title>The status, quality, and expansion of the NIH full-length cDNA project: the Mammalian Gene Collection (MGC).</title>
        <authorList>
            <consortium name="The MGC Project Team"/>
        </authorList>
    </citation>
    <scope>NUCLEOTIDE SEQUENCE [LARGE SCALE MRNA] (ISOFORM 1)</scope>
    <source>
        <tissue>Skin</tissue>
    </source>
</reference>
<reference key="7">
    <citation type="journal article" date="1993" name="EMBO J.">
        <title>Mutational analysis of the human KDEL receptor: distinct structural requirements for Golgi retention, ligand binding and retrograde transport.</title>
        <authorList>
            <person name="Townsley F.M."/>
            <person name="Wilson D.W."/>
            <person name="Pelham H.R.B."/>
        </authorList>
    </citation>
    <scope>FUNCTION</scope>
    <scope>SUBCELLULAR LOCATION</scope>
    <scope>MUTAGENESIS OF ILE-32; 91-ASP-THR-92 AND ASP-193</scope>
</reference>
<reference key="8">
    <citation type="journal article" date="2001" name="Dev. Cell">
        <title>KDEL-cargo regulates interactions between proteins involved in COPI vesicle traffic: measurements in living cells using FRET.</title>
        <authorList>
            <person name="Majoul I."/>
            <person name="Straub M."/>
            <person name="Hell S.W."/>
            <person name="Duden R."/>
            <person name="Soling H.D."/>
        </authorList>
    </citation>
    <scope>FUNCTION</scope>
    <scope>SUBUNIT</scope>
</reference>
<reference key="9">
    <citation type="journal article" date="2003" name="Mol. Biol. Cell">
        <title>The retrieval function of the KDEL receptor requires PKA phosphorylation of its C-terminus.</title>
        <authorList>
            <person name="Cabrera M."/>
            <person name="Muniz M."/>
            <person name="Hidalgo J."/>
            <person name="Vega L."/>
            <person name="Martin M.E."/>
            <person name="Velasco A."/>
        </authorList>
    </citation>
    <scope>FUNCTION</scope>
    <scope>PHOSPHORYLATION AT SER-209</scope>
    <scope>MUTAGENESIS OF SER-209</scope>
    <scope>SUBCELLULAR LOCATION</scope>
</reference>
<reference key="10">
    <citation type="journal article" date="2007" name="J. Cell Biol.">
        <title>A molecular specificity code for the three mammalian KDEL receptors.</title>
        <authorList>
            <person name="Raykhel I."/>
            <person name="Alanen H."/>
            <person name="Salo K."/>
            <person name="Jurvansuu J."/>
            <person name="Nguyen V.D."/>
            <person name="Latva-Ranta M."/>
            <person name="Ruddock L."/>
        </authorList>
    </citation>
    <scope>FUNCTION</scope>
    <scope>SUBCELLULAR LOCATION</scope>
</reference>
<reference key="11">
    <citation type="journal article" date="2015" name="Proteomics">
        <title>N-terminome analysis of the human mitochondrial proteome.</title>
        <authorList>
            <person name="Vaca Jacome A.S."/>
            <person name="Rabilloud T."/>
            <person name="Schaeffer-Reiss C."/>
            <person name="Rompais M."/>
            <person name="Ayoub D."/>
            <person name="Lane L."/>
            <person name="Bairoch A."/>
            <person name="Van Dorsselaer A."/>
            <person name="Carapito C."/>
        </authorList>
    </citation>
    <scope>IDENTIFICATION BY MASS SPECTROMETRY [LARGE SCALE ANALYSIS]</scope>
</reference>
<reference key="12">
    <citation type="journal article" date="2019" name="Science">
        <title>Structural basis for pH-dependent retrieval of ER proteins from the Golgi by the KDEL receptor.</title>
        <authorList>
            <person name="Braeuer P."/>
            <person name="Parker J.L."/>
            <person name="Gerondopoulos A."/>
            <person name="Zimmermann I."/>
            <person name="Seeger M.A."/>
            <person name="Barr F.A."/>
            <person name="Newstead S."/>
        </authorList>
    </citation>
    <scope>FUNCTION</scope>
    <scope>SUBCELLULAR LOCATION</scope>
    <scope>MUTAGENESIS OF HIS-12; ARG-47; GLU-127; TYR-158; ASP-193 AND 204-LYS--LYS-207</scope>
</reference>
<name>ERD21_HUMAN</name>
<organism>
    <name type="scientific">Homo sapiens</name>
    <name type="common">Human</name>
    <dbReference type="NCBI Taxonomy" id="9606"/>
    <lineage>
        <taxon>Eukaryota</taxon>
        <taxon>Metazoa</taxon>
        <taxon>Chordata</taxon>
        <taxon>Craniata</taxon>
        <taxon>Vertebrata</taxon>
        <taxon>Euteleostomi</taxon>
        <taxon>Mammalia</taxon>
        <taxon>Eutheria</taxon>
        <taxon>Euarchontoglires</taxon>
        <taxon>Primates</taxon>
        <taxon>Haplorrhini</taxon>
        <taxon>Catarrhini</taxon>
        <taxon>Hominidae</taxon>
        <taxon>Homo</taxon>
    </lineage>
</organism>
<proteinExistence type="evidence at protein level"/>
<feature type="chain" id="PRO_0000194153" description="ER lumen protein-retaining receptor 1">
    <location>
        <begin position="1"/>
        <end position="212"/>
    </location>
</feature>
<feature type="topological domain" description="Lumenal" evidence="10">
    <location>
        <begin position="1"/>
        <end position="4"/>
    </location>
</feature>
<feature type="transmembrane region" description="Helical" evidence="2">
    <location>
        <begin position="5"/>
        <end position="24"/>
    </location>
</feature>
<feature type="topological domain" description="Cytoplasmic" evidence="10">
    <location>
        <begin position="25"/>
        <end position="32"/>
    </location>
</feature>
<feature type="transmembrane region" description="Helical" evidence="2">
    <location>
        <begin position="33"/>
        <end position="52"/>
    </location>
</feature>
<feature type="topological domain" description="Lumenal" evidence="10">
    <location>
        <begin position="53"/>
        <end position="58"/>
    </location>
</feature>
<feature type="transmembrane region" description="Helical" evidence="2">
    <location>
        <begin position="59"/>
        <end position="79"/>
    </location>
</feature>
<feature type="topological domain" description="Cytoplasmic" evidence="10">
    <location>
        <begin position="80"/>
        <end position="92"/>
    </location>
</feature>
<feature type="transmembrane region" description="Helical" evidence="2">
    <location>
        <begin position="93"/>
        <end position="110"/>
    </location>
</feature>
<feature type="topological domain" description="Lumenal" evidence="10">
    <location>
        <begin position="111"/>
        <end position="116"/>
    </location>
</feature>
<feature type="transmembrane region" description="Helical" evidence="2">
    <location>
        <begin position="117"/>
        <end position="135"/>
    </location>
</feature>
<feature type="topological domain" description="Cytoplasmic" evidence="10">
    <location>
        <begin position="136"/>
        <end position="149"/>
    </location>
</feature>
<feature type="transmembrane region" description="Helical" evidence="2">
    <location>
        <begin position="150"/>
        <end position="168"/>
    </location>
</feature>
<feature type="topological domain" description="Lumenal" evidence="10">
    <location>
        <begin position="169"/>
        <end position="178"/>
    </location>
</feature>
<feature type="transmembrane region" description="Helical" evidence="2">
    <location>
        <begin position="179"/>
        <end position="199"/>
    </location>
</feature>
<feature type="topological domain" description="Cytoplasmic" evidence="10">
    <location>
        <begin position="200"/>
        <end position="212"/>
    </location>
</feature>
<feature type="region of interest" description="Interaction with the K-D-E-L motif on target proteins" evidence="2">
    <location>
        <begin position="47"/>
        <end position="48"/>
    </location>
</feature>
<feature type="region of interest" description="Interaction with the K-D-E-L motif on target proteins" evidence="2">
    <location>
        <begin position="159"/>
        <end position="169"/>
    </location>
</feature>
<feature type="region of interest" description="Important for recycling of cargo proteins with the sequence motif K-D-E-L from the Golgi to the endoplasmic reticulum" evidence="7">
    <location>
        <begin position="204"/>
        <end position="207"/>
    </location>
</feature>
<feature type="site" description="Interaction with the K-D-E-L motif on target proteins" evidence="2">
    <location>
        <position position="5"/>
    </location>
</feature>
<feature type="site" description="Interaction with the K-D-E-L motif on target proteins" evidence="2">
    <location>
        <position position="117"/>
    </location>
</feature>
<feature type="site" description="Important for recycling of cargo proteins with the sequence motif K-D-E-L from the Golgi to the endoplasmic reticulum" evidence="7 8">
    <location>
        <position position="193"/>
    </location>
</feature>
<feature type="modified residue" description="Phosphoserine; by PKA" evidence="4">
    <location>
        <position position="209"/>
    </location>
</feature>
<feature type="splice variant" id="VSP_055484" description="In isoform 2." evidence="9">
    <location>
        <begin position="1"/>
        <end position="62"/>
    </location>
</feature>
<feature type="mutagenesis site" description="Loss of recycling together with cargo proteins containing the sequence motif K-D-E-L from the Golgi to the endoplasmic reticulum." evidence="7">
    <original>H</original>
    <variation>A</variation>
    <location>
        <position position="12"/>
    </location>
</feature>
<feature type="mutagenesis site" description="Decreased binding to the sequence motif K-D-E-L." evidence="8">
    <original>I</original>
    <variation>A</variation>
    <location>
        <position position="32"/>
    </location>
</feature>
<feature type="mutagenesis site" description="Loss of recycling together with cargo proteins containing the sequence motif K-D-E-L from the Golgi to the endoplasmic reticulum." evidence="7">
    <original>R</original>
    <variation>K</variation>
    <location>
        <position position="47"/>
    </location>
</feature>
<feature type="mutagenesis site" description="Decreased binding to the sequence motif K-D-E-L." evidence="8">
    <original>DT</original>
    <variation>AA</variation>
    <location>
        <begin position="91"/>
        <end position="92"/>
    </location>
</feature>
<feature type="mutagenesis site" description="Loss of recycling together with cargo proteins containing the sequence motif K-D-E-L from the Golgi to the endoplasmic reticulum." evidence="7">
    <original>E</original>
    <variation>A</variation>
    <variation>Q</variation>
    <location>
        <position position="127"/>
    </location>
</feature>
<feature type="mutagenesis site" description="Loss of recycling together with cargo proteins containing the sequence motif K-D-E-L from the Golgi to the endoplasmic reticulum." evidence="7">
    <original>Y</original>
    <variation>F</variation>
    <location>
        <position position="158"/>
    </location>
</feature>
<feature type="mutagenesis site" description="Loss of recycling together with cargo proteins containing the sequence motif K-D-E-L from the Golgi to the endoplasmic reticulum." evidence="7 8">
    <original>D</original>
    <variation>N</variation>
    <location>
        <position position="193"/>
    </location>
</feature>
<feature type="mutagenesis site" description="Loss of recycling together with cargo proteins containing the sequence motif K-D-E-L from the Golgi to the endoplasmic reticulum." evidence="7">
    <original>KGKK</original>
    <variation>AGAA</variation>
    <location>
        <begin position="204"/>
        <end position="207"/>
    </location>
</feature>
<feature type="mutagenesis site" description="Inhibits coatomer/ARF-GAP recruitment, receptor redistribution, and intracellular retention of KDEL ligands." evidence="4">
    <original>S</original>
    <variation>A</variation>
    <location>
        <position position="209"/>
    </location>
</feature>
<feature type="mutagenesis site" description="Redistribution to the ER is not affected upon PKA inactivation." evidence="4">
    <original>S</original>
    <variation>D</variation>
    <location>
        <position position="209"/>
    </location>
</feature>
<gene>
    <name type="primary">KDELR1</name>
    <name type="synonym">ERD2.1</name>
</gene>